<organism>
    <name type="scientific">Hahella chejuensis (strain KCTC 2396)</name>
    <dbReference type="NCBI Taxonomy" id="349521"/>
    <lineage>
        <taxon>Bacteria</taxon>
        <taxon>Pseudomonadati</taxon>
        <taxon>Pseudomonadota</taxon>
        <taxon>Gammaproteobacteria</taxon>
        <taxon>Oceanospirillales</taxon>
        <taxon>Hahellaceae</taxon>
        <taxon>Hahella</taxon>
    </lineage>
</organism>
<feature type="chain" id="PRO_1000058002" description="Phosphoglycerate kinase">
    <location>
        <begin position="1"/>
        <end position="388"/>
    </location>
</feature>
<feature type="binding site" evidence="1">
    <location>
        <begin position="21"/>
        <end position="23"/>
    </location>
    <ligand>
        <name>substrate</name>
    </ligand>
</feature>
<feature type="binding site" evidence="1">
    <location>
        <position position="36"/>
    </location>
    <ligand>
        <name>substrate</name>
    </ligand>
</feature>
<feature type="binding site" evidence="1">
    <location>
        <begin position="59"/>
        <end position="62"/>
    </location>
    <ligand>
        <name>substrate</name>
    </ligand>
</feature>
<feature type="binding site" evidence="1">
    <location>
        <position position="114"/>
    </location>
    <ligand>
        <name>substrate</name>
    </ligand>
</feature>
<feature type="binding site" evidence="1">
    <location>
        <position position="147"/>
    </location>
    <ligand>
        <name>substrate</name>
    </ligand>
</feature>
<feature type="binding site" evidence="1">
    <location>
        <position position="198"/>
    </location>
    <ligand>
        <name>ATP</name>
        <dbReference type="ChEBI" id="CHEBI:30616"/>
    </ligand>
</feature>
<feature type="binding site" evidence="1">
    <location>
        <position position="315"/>
    </location>
    <ligand>
        <name>ATP</name>
        <dbReference type="ChEBI" id="CHEBI:30616"/>
    </ligand>
</feature>
<feature type="binding site" evidence="1">
    <location>
        <begin position="341"/>
        <end position="344"/>
    </location>
    <ligand>
        <name>ATP</name>
        <dbReference type="ChEBI" id="CHEBI:30616"/>
    </ligand>
</feature>
<reference key="1">
    <citation type="journal article" date="2005" name="Nucleic Acids Res.">
        <title>Genomic blueprint of Hahella chejuensis, a marine microbe producing an algicidal agent.</title>
        <authorList>
            <person name="Jeong H."/>
            <person name="Yim J.H."/>
            <person name="Lee C."/>
            <person name="Choi S.-H."/>
            <person name="Park Y.K."/>
            <person name="Yoon S.H."/>
            <person name="Hur C.-G."/>
            <person name="Kang H.-Y."/>
            <person name="Kim D."/>
            <person name="Lee H.H."/>
            <person name="Park K.H."/>
            <person name="Park S.-H."/>
            <person name="Park H.-S."/>
            <person name="Lee H.K."/>
            <person name="Oh T.K."/>
            <person name="Kim J.F."/>
        </authorList>
    </citation>
    <scope>NUCLEOTIDE SEQUENCE [LARGE SCALE GENOMIC DNA]</scope>
    <source>
        <strain>KCTC 2396</strain>
    </source>
</reference>
<evidence type="ECO:0000255" key="1">
    <source>
        <dbReference type="HAMAP-Rule" id="MF_00145"/>
    </source>
</evidence>
<accession>Q2SLS9</accession>
<sequence>MSVIKMTDLDLRGKRVLIREDLNVPVKNGKVTSDARIQAALPTIKLAMEQGAKVMVMSHLGRPEEGQFSEENSMQPVGAHLSSLLGHDVPVVRDYLDGDFEVEEGGLVLFENVRFNVGEGKDNEELSKKYAALCDIFVMDAFGTAHRAQASTHGVAKFAPVACAGPLLAAELEALGQALDKPQRPMVAIVAGSKVSTKLDVLNSLSEVCDQLIVGGGIANTFLAAADHKVGKSLCEMDLLDTARSIAAKVQIPLPTDVVTAKAFSESAEASVKPIAEVTDDDMILDIGPQSAAALAELLKSAKTILWNGPVGVFEFDQFGDGTKTLAQAIAESDAFSIAGGGDTLAAIDKYGVSEKISYISTGGGAFLEFVEGKTLPAVAMLQKRAAE</sequence>
<gene>
    <name evidence="1" type="primary">pgk</name>
    <name type="ordered locus">HCH_01537</name>
</gene>
<dbReference type="EC" id="2.7.2.3" evidence="1"/>
<dbReference type="EMBL" id="CP000155">
    <property type="protein sequence ID" value="ABC28395.1"/>
    <property type="molecule type" value="Genomic_DNA"/>
</dbReference>
<dbReference type="RefSeq" id="WP_011395468.1">
    <property type="nucleotide sequence ID" value="NC_007645.1"/>
</dbReference>
<dbReference type="SMR" id="Q2SLS9"/>
<dbReference type="STRING" id="349521.HCH_01537"/>
<dbReference type="KEGG" id="hch:HCH_01537"/>
<dbReference type="eggNOG" id="COG0126">
    <property type="taxonomic scope" value="Bacteria"/>
</dbReference>
<dbReference type="HOGENOM" id="CLU_025427_0_2_6"/>
<dbReference type="OrthoDB" id="9808460at2"/>
<dbReference type="UniPathway" id="UPA00109">
    <property type="reaction ID" value="UER00185"/>
</dbReference>
<dbReference type="Proteomes" id="UP000000238">
    <property type="component" value="Chromosome"/>
</dbReference>
<dbReference type="GO" id="GO:0005829">
    <property type="term" value="C:cytosol"/>
    <property type="evidence" value="ECO:0007669"/>
    <property type="project" value="TreeGrafter"/>
</dbReference>
<dbReference type="GO" id="GO:0043531">
    <property type="term" value="F:ADP binding"/>
    <property type="evidence" value="ECO:0007669"/>
    <property type="project" value="TreeGrafter"/>
</dbReference>
<dbReference type="GO" id="GO:0005524">
    <property type="term" value="F:ATP binding"/>
    <property type="evidence" value="ECO:0007669"/>
    <property type="project" value="UniProtKB-KW"/>
</dbReference>
<dbReference type="GO" id="GO:0004618">
    <property type="term" value="F:phosphoglycerate kinase activity"/>
    <property type="evidence" value="ECO:0007669"/>
    <property type="project" value="UniProtKB-UniRule"/>
</dbReference>
<dbReference type="GO" id="GO:0006094">
    <property type="term" value="P:gluconeogenesis"/>
    <property type="evidence" value="ECO:0007669"/>
    <property type="project" value="TreeGrafter"/>
</dbReference>
<dbReference type="GO" id="GO:0006096">
    <property type="term" value="P:glycolytic process"/>
    <property type="evidence" value="ECO:0007669"/>
    <property type="project" value="UniProtKB-UniRule"/>
</dbReference>
<dbReference type="FunFam" id="3.40.50.1260:FF:000001">
    <property type="entry name" value="Phosphoglycerate kinase"/>
    <property type="match status" value="1"/>
</dbReference>
<dbReference type="FunFam" id="3.40.50.1260:FF:000002">
    <property type="entry name" value="Phosphoglycerate kinase"/>
    <property type="match status" value="1"/>
</dbReference>
<dbReference type="Gene3D" id="3.40.50.1260">
    <property type="entry name" value="Phosphoglycerate kinase, N-terminal domain"/>
    <property type="match status" value="2"/>
</dbReference>
<dbReference type="HAMAP" id="MF_00145">
    <property type="entry name" value="Phosphoglyc_kinase"/>
    <property type="match status" value="1"/>
</dbReference>
<dbReference type="InterPro" id="IPR001576">
    <property type="entry name" value="Phosphoglycerate_kinase"/>
</dbReference>
<dbReference type="InterPro" id="IPR015911">
    <property type="entry name" value="Phosphoglycerate_kinase_CS"/>
</dbReference>
<dbReference type="InterPro" id="IPR015824">
    <property type="entry name" value="Phosphoglycerate_kinase_N"/>
</dbReference>
<dbReference type="InterPro" id="IPR036043">
    <property type="entry name" value="Phosphoglycerate_kinase_sf"/>
</dbReference>
<dbReference type="PANTHER" id="PTHR11406">
    <property type="entry name" value="PHOSPHOGLYCERATE KINASE"/>
    <property type="match status" value="1"/>
</dbReference>
<dbReference type="PANTHER" id="PTHR11406:SF23">
    <property type="entry name" value="PHOSPHOGLYCERATE KINASE 1, CHLOROPLASTIC-RELATED"/>
    <property type="match status" value="1"/>
</dbReference>
<dbReference type="Pfam" id="PF00162">
    <property type="entry name" value="PGK"/>
    <property type="match status" value="1"/>
</dbReference>
<dbReference type="PIRSF" id="PIRSF000724">
    <property type="entry name" value="Pgk"/>
    <property type="match status" value="1"/>
</dbReference>
<dbReference type="PRINTS" id="PR00477">
    <property type="entry name" value="PHGLYCKINASE"/>
</dbReference>
<dbReference type="SUPFAM" id="SSF53748">
    <property type="entry name" value="Phosphoglycerate kinase"/>
    <property type="match status" value="1"/>
</dbReference>
<dbReference type="PROSITE" id="PS00111">
    <property type="entry name" value="PGLYCERATE_KINASE"/>
    <property type="match status" value="1"/>
</dbReference>
<proteinExistence type="inferred from homology"/>
<protein>
    <recommendedName>
        <fullName evidence="1">Phosphoglycerate kinase</fullName>
        <ecNumber evidence="1">2.7.2.3</ecNumber>
    </recommendedName>
</protein>
<name>PGK_HAHCH</name>
<comment type="catalytic activity">
    <reaction evidence="1">
        <text>(2R)-3-phosphoglycerate + ATP = (2R)-3-phospho-glyceroyl phosphate + ADP</text>
        <dbReference type="Rhea" id="RHEA:14801"/>
        <dbReference type="ChEBI" id="CHEBI:30616"/>
        <dbReference type="ChEBI" id="CHEBI:57604"/>
        <dbReference type="ChEBI" id="CHEBI:58272"/>
        <dbReference type="ChEBI" id="CHEBI:456216"/>
        <dbReference type="EC" id="2.7.2.3"/>
    </reaction>
</comment>
<comment type="pathway">
    <text evidence="1">Carbohydrate degradation; glycolysis; pyruvate from D-glyceraldehyde 3-phosphate: step 2/5.</text>
</comment>
<comment type="subunit">
    <text evidence="1">Monomer.</text>
</comment>
<comment type="subcellular location">
    <subcellularLocation>
        <location evidence="1">Cytoplasm</location>
    </subcellularLocation>
</comment>
<comment type="similarity">
    <text evidence="1">Belongs to the phosphoglycerate kinase family.</text>
</comment>
<keyword id="KW-0067">ATP-binding</keyword>
<keyword id="KW-0963">Cytoplasm</keyword>
<keyword id="KW-0324">Glycolysis</keyword>
<keyword id="KW-0418">Kinase</keyword>
<keyword id="KW-0547">Nucleotide-binding</keyword>
<keyword id="KW-1185">Reference proteome</keyword>
<keyword id="KW-0808">Transferase</keyword>